<name>OVOL2_MOUSE</name>
<accession>Q8CIV7</accession>
<accession>Q505Q7</accession>
<accession>Q6F661</accession>
<accession>Q8CIV6</accession>
<accession>Q8K0D6</accession>
<accession>Q9D949</accession>
<protein>
    <recommendedName>
        <fullName evidence="17">Transcription factor Ovo-like 2</fullName>
        <shortName>mOvo2</shortName>
    </recommendedName>
    <alternativeName>
        <fullName>Zinc finger OVO2</fullName>
    </alternativeName>
    <alternativeName>
        <fullName>Zinc finger protein 339</fullName>
    </alternativeName>
    <alternativeName>
        <fullName>Zinc finger protein mOVO</fullName>
    </alternativeName>
</protein>
<dbReference type="EMBL" id="AY090537">
    <property type="protein sequence ID" value="AAM11991.1"/>
    <property type="molecule type" value="mRNA"/>
</dbReference>
<dbReference type="EMBL" id="AY090538">
    <property type="protein sequence ID" value="AAM11992.1"/>
    <property type="molecule type" value="mRNA"/>
</dbReference>
<dbReference type="EMBL" id="AB101294">
    <property type="protein sequence ID" value="BAD29939.1"/>
    <property type="molecule type" value="mRNA"/>
</dbReference>
<dbReference type="EMBL" id="AB101295">
    <property type="protein sequence ID" value="BAD29940.1"/>
    <property type="molecule type" value="mRNA"/>
</dbReference>
<dbReference type="EMBL" id="AB101296">
    <property type="protein sequence ID" value="BAD29941.1"/>
    <property type="molecule type" value="mRNA"/>
</dbReference>
<dbReference type="EMBL" id="AB101299">
    <property type="protein sequence ID" value="BAD29942.1"/>
    <property type="molecule type" value="Genomic_DNA"/>
</dbReference>
<dbReference type="EMBL" id="AB101299">
    <property type="protein sequence ID" value="BAD29943.1"/>
    <property type="molecule type" value="Genomic_DNA"/>
</dbReference>
<dbReference type="EMBL" id="AB101299">
    <property type="protein sequence ID" value="BAD29944.1"/>
    <property type="molecule type" value="Genomic_DNA"/>
</dbReference>
<dbReference type="EMBL" id="AK007360">
    <property type="protein sequence ID" value="BAB24985.1"/>
    <property type="molecule type" value="mRNA"/>
</dbReference>
<dbReference type="EMBL" id="AL808123">
    <property type="status" value="NOT_ANNOTATED_CDS"/>
    <property type="molecule type" value="Genomic_DNA"/>
</dbReference>
<dbReference type="EMBL" id="CH466519">
    <property type="protein sequence ID" value="EDL28455.1"/>
    <property type="molecule type" value="Genomic_DNA"/>
</dbReference>
<dbReference type="EMBL" id="BC031771">
    <property type="protein sequence ID" value="AAH31771.1"/>
    <property type="molecule type" value="mRNA"/>
</dbReference>
<dbReference type="EMBL" id="BC057210">
    <property type="protein sequence ID" value="AAH57210.1"/>
    <property type="molecule type" value="mRNA"/>
</dbReference>
<dbReference type="EMBL" id="BC094445">
    <property type="protein sequence ID" value="AAH94445.1"/>
    <property type="molecule type" value="mRNA"/>
</dbReference>
<dbReference type="CCDS" id="CCDS16817.1">
    <molecule id="Q8CIV7-1"/>
</dbReference>
<dbReference type="CCDS" id="CCDS16818.1">
    <molecule id="Q8CIV7-2"/>
</dbReference>
<dbReference type="RefSeq" id="NP_081200.2">
    <molecule id="Q8CIV7-1"/>
    <property type="nucleotide sequence ID" value="NM_026924.3"/>
</dbReference>
<dbReference type="RefSeq" id="NP_694455.2">
    <molecule id="Q8CIV7-2"/>
    <property type="nucleotide sequence ID" value="NM_152947.3"/>
</dbReference>
<dbReference type="SMR" id="Q8CIV7"/>
<dbReference type="FunCoup" id="Q8CIV7">
    <property type="interactions" value="883"/>
</dbReference>
<dbReference type="STRING" id="10090.ENSMUSP00000044026"/>
<dbReference type="iPTMnet" id="Q8CIV7"/>
<dbReference type="PhosphoSitePlus" id="Q8CIV7"/>
<dbReference type="PaxDb" id="10090-ENSMUSP00000044026"/>
<dbReference type="ProteomicsDB" id="294138">
    <molecule id="Q8CIV7-1"/>
</dbReference>
<dbReference type="ProteomicsDB" id="294139">
    <molecule id="Q8CIV7-2"/>
</dbReference>
<dbReference type="ProteomicsDB" id="294140">
    <molecule id="Q8CIV7-3"/>
</dbReference>
<dbReference type="Antibodypedia" id="24517">
    <property type="antibodies" value="175 antibodies from 26 providers"/>
</dbReference>
<dbReference type="DNASU" id="107586"/>
<dbReference type="Ensembl" id="ENSMUST00000037423.4">
    <molecule id="Q8CIV7-1"/>
    <property type="protein sequence ID" value="ENSMUSP00000044026.4"/>
    <property type="gene ID" value="ENSMUSG00000037279.14"/>
</dbReference>
<dbReference type="Ensembl" id="ENSMUST00000103171.10">
    <molecule id="Q8CIV7-2"/>
    <property type="protein sequence ID" value="ENSMUSP00000099460.4"/>
    <property type="gene ID" value="ENSMUSG00000037279.14"/>
</dbReference>
<dbReference type="GeneID" id="107586"/>
<dbReference type="KEGG" id="mmu:107586"/>
<dbReference type="UCSC" id="uc008mqv.1">
    <molecule id="Q8CIV7-2"/>
    <property type="organism name" value="mouse"/>
</dbReference>
<dbReference type="UCSC" id="uc008mqw.1">
    <molecule id="Q8CIV7-1"/>
    <property type="organism name" value="mouse"/>
</dbReference>
<dbReference type="AGR" id="MGI:1338039"/>
<dbReference type="CTD" id="58495"/>
<dbReference type="MGI" id="MGI:1338039">
    <property type="gene designation" value="Ovol2"/>
</dbReference>
<dbReference type="VEuPathDB" id="HostDB:ENSMUSG00000037279"/>
<dbReference type="eggNOG" id="KOG3576">
    <property type="taxonomic scope" value="Eukaryota"/>
</dbReference>
<dbReference type="GeneTree" id="ENSGT00940000159359"/>
<dbReference type="HOGENOM" id="CLU_087964_0_0_1"/>
<dbReference type="InParanoid" id="Q8CIV7"/>
<dbReference type="OMA" id="PVSLDCM"/>
<dbReference type="OrthoDB" id="6508643at2759"/>
<dbReference type="PhylomeDB" id="Q8CIV7"/>
<dbReference type="TreeFam" id="TF337552"/>
<dbReference type="BioGRID-ORCS" id="107586">
    <property type="hits" value="1 hit in 78 CRISPR screens"/>
</dbReference>
<dbReference type="ChiTaRS" id="Ovol2">
    <property type="organism name" value="mouse"/>
</dbReference>
<dbReference type="PRO" id="PR:Q8CIV7"/>
<dbReference type="Proteomes" id="UP000000589">
    <property type="component" value="Chromosome 2"/>
</dbReference>
<dbReference type="RNAct" id="Q8CIV7">
    <property type="molecule type" value="protein"/>
</dbReference>
<dbReference type="Bgee" id="ENSMUSG00000037279">
    <property type="expression patterns" value="Expressed in spermatid and 74 other cell types or tissues"/>
</dbReference>
<dbReference type="GO" id="GO:0005634">
    <property type="term" value="C:nucleus"/>
    <property type="evidence" value="ECO:0000314"/>
    <property type="project" value="MGI"/>
</dbReference>
<dbReference type="GO" id="GO:0003682">
    <property type="term" value="F:chromatin binding"/>
    <property type="evidence" value="ECO:0000314"/>
    <property type="project" value="MGI"/>
</dbReference>
<dbReference type="GO" id="GO:0003677">
    <property type="term" value="F:DNA binding"/>
    <property type="evidence" value="ECO:0000314"/>
    <property type="project" value="MGI"/>
</dbReference>
<dbReference type="GO" id="GO:0001228">
    <property type="term" value="F:DNA-binding transcription activator activity, RNA polymerase II-specific"/>
    <property type="evidence" value="ECO:0000314"/>
    <property type="project" value="MGI"/>
</dbReference>
<dbReference type="GO" id="GO:0003700">
    <property type="term" value="F:DNA-binding transcription factor activity"/>
    <property type="evidence" value="ECO:0000250"/>
    <property type="project" value="MGI"/>
</dbReference>
<dbReference type="GO" id="GO:0001227">
    <property type="term" value="F:DNA-binding transcription repressor activity, RNA polymerase II-specific"/>
    <property type="evidence" value="ECO:0000314"/>
    <property type="project" value="ARUK-UCL"/>
</dbReference>
<dbReference type="GO" id="GO:1990837">
    <property type="term" value="F:sequence-specific double-stranded DNA binding"/>
    <property type="evidence" value="ECO:0007669"/>
    <property type="project" value="Ensembl"/>
</dbReference>
<dbReference type="GO" id="GO:0008270">
    <property type="term" value="F:zinc ion binding"/>
    <property type="evidence" value="ECO:0007669"/>
    <property type="project" value="UniProtKB-KW"/>
</dbReference>
<dbReference type="GO" id="GO:0001525">
    <property type="term" value="P:angiogenesis"/>
    <property type="evidence" value="ECO:0000315"/>
    <property type="project" value="MGI"/>
</dbReference>
<dbReference type="GO" id="GO:0008283">
    <property type="term" value="P:cell population proliferation"/>
    <property type="evidence" value="ECO:0000315"/>
    <property type="project" value="MGI"/>
</dbReference>
<dbReference type="GO" id="GO:0009953">
    <property type="term" value="P:dorsal/ventral pattern formation"/>
    <property type="evidence" value="ECO:0000315"/>
    <property type="project" value="MGI"/>
</dbReference>
<dbReference type="GO" id="GO:0048557">
    <property type="term" value="P:embryonic digestive tract morphogenesis"/>
    <property type="evidence" value="ECO:0000315"/>
    <property type="project" value="MGI"/>
</dbReference>
<dbReference type="GO" id="GO:0060214">
    <property type="term" value="P:endocardium formation"/>
    <property type="evidence" value="ECO:0000315"/>
    <property type="project" value="MGI"/>
</dbReference>
<dbReference type="GO" id="GO:0009913">
    <property type="term" value="P:epidermal cell differentiation"/>
    <property type="evidence" value="ECO:0000315"/>
    <property type="project" value="UniProtKB"/>
</dbReference>
<dbReference type="GO" id="GO:0008544">
    <property type="term" value="P:epidermis development"/>
    <property type="evidence" value="ECO:0000316"/>
    <property type="project" value="MGI"/>
</dbReference>
<dbReference type="GO" id="GO:0007507">
    <property type="term" value="P:heart development"/>
    <property type="evidence" value="ECO:0000315"/>
    <property type="project" value="MGI"/>
</dbReference>
<dbReference type="GO" id="GO:0001947">
    <property type="term" value="P:heart looping"/>
    <property type="evidence" value="ECO:0000315"/>
    <property type="project" value="MGI"/>
</dbReference>
<dbReference type="GO" id="GO:0060347">
    <property type="term" value="P:heart trabecula formation"/>
    <property type="evidence" value="ECO:0000315"/>
    <property type="project" value="MGI"/>
</dbReference>
<dbReference type="GO" id="GO:0060716">
    <property type="term" value="P:labyrinthine layer blood vessel development"/>
    <property type="evidence" value="ECO:0000315"/>
    <property type="project" value="MGI"/>
</dbReference>
<dbReference type="GO" id="GO:0008285">
    <property type="term" value="P:negative regulation of cell population proliferation"/>
    <property type="evidence" value="ECO:0000315"/>
    <property type="project" value="MGI"/>
</dbReference>
<dbReference type="GO" id="GO:0045892">
    <property type="term" value="P:negative regulation of DNA-templated transcription"/>
    <property type="evidence" value="ECO:0000314"/>
    <property type="project" value="MGI"/>
</dbReference>
<dbReference type="GO" id="GO:0010719">
    <property type="term" value="P:negative regulation of epithelial to mesenchymal transition"/>
    <property type="evidence" value="ECO:0000314"/>
    <property type="project" value="ARUK-UCL"/>
</dbReference>
<dbReference type="GO" id="GO:0010629">
    <property type="term" value="P:negative regulation of gene expression"/>
    <property type="evidence" value="ECO:0000314"/>
    <property type="project" value="ARUK-UCL"/>
</dbReference>
<dbReference type="GO" id="GO:0045617">
    <property type="term" value="P:negative regulation of keratinocyte differentiation"/>
    <property type="evidence" value="ECO:0000250"/>
    <property type="project" value="UniProtKB"/>
</dbReference>
<dbReference type="GO" id="GO:0045746">
    <property type="term" value="P:negative regulation of Notch signaling pathway"/>
    <property type="evidence" value="ECO:0000250"/>
    <property type="project" value="UniProtKB"/>
</dbReference>
<dbReference type="GO" id="GO:0060392">
    <property type="term" value="P:negative regulation of SMAD protein signal transduction"/>
    <property type="evidence" value="ECO:0000314"/>
    <property type="project" value="ARUK-UCL"/>
</dbReference>
<dbReference type="GO" id="GO:2000647">
    <property type="term" value="P:negative regulation of stem cell proliferation"/>
    <property type="evidence" value="ECO:0000316"/>
    <property type="project" value="MGI"/>
</dbReference>
<dbReference type="GO" id="GO:0030512">
    <property type="term" value="P:negative regulation of transforming growth factor beta receptor signaling pathway"/>
    <property type="evidence" value="ECO:0000314"/>
    <property type="project" value="ARUK-UCL"/>
</dbReference>
<dbReference type="GO" id="GO:0001755">
    <property type="term" value="P:neural crest cell migration"/>
    <property type="evidence" value="ECO:0000315"/>
    <property type="project" value="MGI"/>
</dbReference>
<dbReference type="GO" id="GO:0001842">
    <property type="term" value="P:neural fold formation"/>
    <property type="evidence" value="ECO:0000315"/>
    <property type="project" value="MGI"/>
</dbReference>
<dbReference type="GO" id="GO:0045893">
    <property type="term" value="P:positive regulation of DNA-templated transcription"/>
    <property type="evidence" value="ECO:0000314"/>
    <property type="project" value="MGI"/>
</dbReference>
<dbReference type="GO" id="GO:0010628">
    <property type="term" value="P:positive regulation of gene expression"/>
    <property type="evidence" value="ECO:0000314"/>
    <property type="project" value="ARUK-UCL"/>
</dbReference>
<dbReference type="GO" id="GO:0045618">
    <property type="term" value="P:positive regulation of keratinocyte differentiation"/>
    <property type="evidence" value="ECO:0000314"/>
    <property type="project" value="MGI"/>
</dbReference>
<dbReference type="GO" id="GO:0051726">
    <property type="term" value="P:regulation of cell cycle"/>
    <property type="evidence" value="ECO:0000250"/>
    <property type="project" value="UniProtKB"/>
</dbReference>
<dbReference type="GO" id="GO:0010837">
    <property type="term" value="P:regulation of keratinocyte proliferation"/>
    <property type="evidence" value="ECO:0000315"/>
    <property type="project" value="BHF-UCL"/>
</dbReference>
<dbReference type="FunFam" id="3.30.160.60:FF:001250">
    <property type="entry name" value="putative transcription factor ovo-like protein 3"/>
    <property type="match status" value="1"/>
</dbReference>
<dbReference type="FunFam" id="3.30.160.60:FF:000452">
    <property type="entry name" value="Transcription factor Ovo-like 2"/>
    <property type="match status" value="1"/>
</dbReference>
<dbReference type="Gene3D" id="3.30.160.60">
    <property type="entry name" value="Classic Zinc Finger"/>
    <property type="match status" value="2"/>
</dbReference>
<dbReference type="InterPro" id="IPR027756">
    <property type="entry name" value="Ovo-like"/>
</dbReference>
<dbReference type="InterPro" id="IPR036236">
    <property type="entry name" value="Znf_C2H2_sf"/>
</dbReference>
<dbReference type="InterPro" id="IPR013087">
    <property type="entry name" value="Znf_C2H2_type"/>
</dbReference>
<dbReference type="PANTHER" id="PTHR10032:SF193">
    <property type="entry name" value="TRANSCRIPTION FACTOR OVO-LIKE 2"/>
    <property type="match status" value="1"/>
</dbReference>
<dbReference type="PANTHER" id="PTHR10032">
    <property type="entry name" value="ZINC FINGER PROTEIN WITH KRAB AND SCAN DOMAINS"/>
    <property type="match status" value="1"/>
</dbReference>
<dbReference type="Pfam" id="PF00096">
    <property type="entry name" value="zf-C2H2"/>
    <property type="match status" value="2"/>
</dbReference>
<dbReference type="Pfam" id="PF13894">
    <property type="entry name" value="zf-C2H2_4"/>
    <property type="match status" value="1"/>
</dbReference>
<dbReference type="Pfam" id="PF13912">
    <property type="entry name" value="zf-C2H2_6"/>
    <property type="match status" value="1"/>
</dbReference>
<dbReference type="SMART" id="SM00355">
    <property type="entry name" value="ZnF_C2H2"/>
    <property type="match status" value="4"/>
</dbReference>
<dbReference type="SUPFAM" id="SSF57667">
    <property type="entry name" value="beta-beta-alpha zinc fingers"/>
    <property type="match status" value="2"/>
</dbReference>
<dbReference type="PROSITE" id="PS00028">
    <property type="entry name" value="ZINC_FINGER_C2H2_1"/>
    <property type="match status" value="3"/>
</dbReference>
<dbReference type="PROSITE" id="PS50157">
    <property type="entry name" value="ZINC_FINGER_C2H2_2"/>
    <property type="match status" value="3"/>
</dbReference>
<keyword id="KW-0025">Alternative splicing</keyword>
<keyword id="KW-0217">Developmental protein</keyword>
<keyword id="KW-0238">DNA-binding</keyword>
<keyword id="KW-0479">Metal-binding</keyword>
<keyword id="KW-0539">Nucleus</keyword>
<keyword id="KW-0597">Phosphoprotein</keyword>
<keyword id="KW-1185">Reference proteome</keyword>
<keyword id="KW-0677">Repeat</keyword>
<keyword id="KW-0804">Transcription</keyword>
<keyword id="KW-0805">Transcription regulation</keyword>
<keyword id="KW-0862">Zinc</keyword>
<keyword id="KW-0863">Zinc-finger</keyword>
<reference key="1">
    <citation type="journal article" date="1998" name="FEBS Lett.">
        <title>Expression of murine novel zinc finger proteins highly homologous to Drosophila ovo gene product in testis.</title>
        <authorList>
            <person name="Masu Y."/>
            <person name="Ikeda S."/>
            <person name="Okuda-Ashitaka E."/>
            <person name="Sato E."/>
            <person name="Ito S."/>
        </authorList>
    </citation>
    <scope>NUCLEOTIDE SEQUENCE [MRNA] (ISOFORMS 1 AND 3)</scope>
    <scope>TISSUE SPECIFICITY</scope>
    <scope>SUBCELLULAR LOCATION</scope>
</reference>
<reference key="2">
    <citation type="journal article" date="2002" name="Genomics">
        <title>Ovol2, a mammalian homolog of Drosophila ovo: gene structure, chromosomal mapping, and aberrant expression in blind-sterile mice.</title>
        <authorList>
            <person name="Li B."/>
            <person name="Dai Q."/>
            <person name="Li L."/>
            <person name="Nair M."/>
            <person name="Mackay D.R."/>
            <person name="Dai X."/>
        </authorList>
    </citation>
    <scope>NUCLEOTIDE SEQUENCE [MRNA] (ISOFORMS 1 AND 2)</scope>
    <scope>TISSUE SPECIFICITY</scope>
    <source>
        <strain>CD-1</strain>
    </source>
</reference>
<reference key="3">
    <citation type="journal article" date="2004" name="Gene">
        <title>Characterization of the isoforms of MOVO zinc finger protein, a mouse homologue of Drosophila Ovo, as a transcription factors.</title>
        <authorList>
            <person name="Unezaki S."/>
            <person name="Nishizawa M."/>
            <person name="Okuda-Ashitaka E."/>
            <person name="Masu Y."/>
            <person name="Mukai M."/>
            <person name="Kobayashi S."/>
            <person name="Sawamoto K."/>
            <person name="Okano H."/>
            <person name="Ito S."/>
        </authorList>
    </citation>
    <scope>NUCLEOTIDE SEQUENCE [MRNA] (ISOFORMS 2 AND 3)</scope>
    <scope>FUNCTION</scope>
    <scope>DEVELOPMENTAL STAGE</scope>
    <scope>TISSUE SPECIFICITY</scope>
    <source>
        <strain>ICR</strain>
        <tissue>Liver</tissue>
        <tissue>Testis</tissue>
    </source>
</reference>
<reference key="4">
    <citation type="journal article" date="2005" name="Science">
        <title>The transcriptional landscape of the mammalian genome.</title>
        <authorList>
            <person name="Carninci P."/>
            <person name="Kasukawa T."/>
            <person name="Katayama S."/>
            <person name="Gough J."/>
            <person name="Frith M.C."/>
            <person name="Maeda N."/>
            <person name="Oyama R."/>
            <person name="Ravasi T."/>
            <person name="Lenhard B."/>
            <person name="Wells C."/>
            <person name="Kodzius R."/>
            <person name="Shimokawa K."/>
            <person name="Bajic V.B."/>
            <person name="Brenner S.E."/>
            <person name="Batalov S."/>
            <person name="Forrest A.R."/>
            <person name="Zavolan M."/>
            <person name="Davis M.J."/>
            <person name="Wilming L.G."/>
            <person name="Aidinis V."/>
            <person name="Allen J.E."/>
            <person name="Ambesi-Impiombato A."/>
            <person name="Apweiler R."/>
            <person name="Aturaliya R.N."/>
            <person name="Bailey T.L."/>
            <person name="Bansal M."/>
            <person name="Baxter L."/>
            <person name="Beisel K.W."/>
            <person name="Bersano T."/>
            <person name="Bono H."/>
            <person name="Chalk A.M."/>
            <person name="Chiu K.P."/>
            <person name="Choudhary V."/>
            <person name="Christoffels A."/>
            <person name="Clutterbuck D.R."/>
            <person name="Crowe M.L."/>
            <person name="Dalla E."/>
            <person name="Dalrymple B.P."/>
            <person name="de Bono B."/>
            <person name="Della Gatta G."/>
            <person name="di Bernardo D."/>
            <person name="Down T."/>
            <person name="Engstrom P."/>
            <person name="Fagiolini M."/>
            <person name="Faulkner G."/>
            <person name="Fletcher C.F."/>
            <person name="Fukushima T."/>
            <person name="Furuno M."/>
            <person name="Futaki S."/>
            <person name="Gariboldi M."/>
            <person name="Georgii-Hemming P."/>
            <person name="Gingeras T.R."/>
            <person name="Gojobori T."/>
            <person name="Green R.E."/>
            <person name="Gustincich S."/>
            <person name="Harbers M."/>
            <person name="Hayashi Y."/>
            <person name="Hensch T.K."/>
            <person name="Hirokawa N."/>
            <person name="Hill D."/>
            <person name="Huminiecki L."/>
            <person name="Iacono M."/>
            <person name="Ikeo K."/>
            <person name="Iwama A."/>
            <person name="Ishikawa T."/>
            <person name="Jakt M."/>
            <person name="Kanapin A."/>
            <person name="Katoh M."/>
            <person name="Kawasawa Y."/>
            <person name="Kelso J."/>
            <person name="Kitamura H."/>
            <person name="Kitano H."/>
            <person name="Kollias G."/>
            <person name="Krishnan S.P."/>
            <person name="Kruger A."/>
            <person name="Kummerfeld S.K."/>
            <person name="Kurochkin I.V."/>
            <person name="Lareau L.F."/>
            <person name="Lazarevic D."/>
            <person name="Lipovich L."/>
            <person name="Liu J."/>
            <person name="Liuni S."/>
            <person name="McWilliam S."/>
            <person name="Madan Babu M."/>
            <person name="Madera M."/>
            <person name="Marchionni L."/>
            <person name="Matsuda H."/>
            <person name="Matsuzawa S."/>
            <person name="Miki H."/>
            <person name="Mignone F."/>
            <person name="Miyake S."/>
            <person name="Morris K."/>
            <person name="Mottagui-Tabar S."/>
            <person name="Mulder N."/>
            <person name="Nakano N."/>
            <person name="Nakauchi H."/>
            <person name="Ng P."/>
            <person name="Nilsson R."/>
            <person name="Nishiguchi S."/>
            <person name="Nishikawa S."/>
            <person name="Nori F."/>
            <person name="Ohara O."/>
            <person name="Okazaki Y."/>
            <person name="Orlando V."/>
            <person name="Pang K.C."/>
            <person name="Pavan W.J."/>
            <person name="Pavesi G."/>
            <person name="Pesole G."/>
            <person name="Petrovsky N."/>
            <person name="Piazza S."/>
            <person name="Reed J."/>
            <person name="Reid J.F."/>
            <person name="Ring B.Z."/>
            <person name="Ringwald M."/>
            <person name="Rost B."/>
            <person name="Ruan Y."/>
            <person name="Salzberg S.L."/>
            <person name="Sandelin A."/>
            <person name="Schneider C."/>
            <person name="Schoenbach C."/>
            <person name="Sekiguchi K."/>
            <person name="Semple C.A."/>
            <person name="Seno S."/>
            <person name="Sessa L."/>
            <person name="Sheng Y."/>
            <person name="Shibata Y."/>
            <person name="Shimada H."/>
            <person name="Shimada K."/>
            <person name="Silva D."/>
            <person name="Sinclair B."/>
            <person name="Sperling S."/>
            <person name="Stupka E."/>
            <person name="Sugiura K."/>
            <person name="Sultana R."/>
            <person name="Takenaka Y."/>
            <person name="Taki K."/>
            <person name="Tammoja K."/>
            <person name="Tan S.L."/>
            <person name="Tang S."/>
            <person name="Taylor M.S."/>
            <person name="Tegner J."/>
            <person name="Teichmann S.A."/>
            <person name="Ueda H.R."/>
            <person name="van Nimwegen E."/>
            <person name="Verardo R."/>
            <person name="Wei C.L."/>
            <person name="Yagi K."/>
            <person name="Yamanishi H."/>
            <person name="Zabarovsky E."/>
            <person name="Zhu S."/>
            <person name="Zimmer A."/>
            <person name="Hide W."/>
            <person name="Bult C."/>
            <person name="Grimmond S.M."/>
            <person name="Teasdale R.D."/>
            <person name="Liu E.T."/>
            <person name="Brusic V."/>
            <person name="Quackenbush J."/>
            <person name="Wahlestedt C."/>
            <person name="Mattick J.S."/>
            <person name="Hume D.A."/>
            <person name="Kai C."/>
            <person name="Sasaki D."/>
            <person name="Tomaru Y."/>
            <person name="Fukuda S."/>
            <person name="Kanamori-Katayama M."/>
            <person name="Suzuki M."/>
            <person name="Aoki J."/>
            <person name="Arakawa T."/>
            <person name="Iida J."/>
            <person name="Imamura K."/>
            <person name="Itoh M."/>
            <person name="Kato T."/>
            <person name="Kawaji H."/>
            <person name="Kawagashira N."/>
            <person name="Kawashima T."/>
            <person name="Kojima M."/>
            <person name="Kondo S."/>
            <person name="Konno H."/>
            <person name="Nakano K."/>
            <person name="Ninomiya N."/>
            <person name="Nishio T."/>
            <person name="Okada M."/>
            <person name="Plessy C."/>
            <person name="Shibata K."/>
            <person name="Shiraki T."/>
            <person name="Suzuki S."/>
            <person name="Tagami M."/>
            <person name="Waki K."/>
            <person name="Watahiki A."/>
            <person name="Okamura-Oho Y."/>
            <person name="Suzuki H."/>
            <person name="Kawai J."/>
            <person name="Hayashizaki Y."/>
        </authorList>
    </citation>
    <scope>NUCLEOTIDE SEQUENCE [LARGE SCALE MRNA] (ISOFORM 3)</scope>
    <source>
        <strain>C57BL/6J</strain>
        <tissue>Pancreas</tissue>
    </source>
</reference>
<reference key="5">
    <citation type="journal article" date="2009" name="PLoS Biol.">
        <title>Lineage-specific biology revealed by a finished genome assembly of the mouse.</title>
        <authorList>
            <person name="Church D.M."/>
            <person name="Goodstadt L."/>
            <person name="Hillier L.W."/>
            <person name="Zody M.C."/>
            <person name="Goldstein S."/>
            <person name="She X."/>
            <person name="Bult C.J."/>
            <person name="Agarwala R."/>
            <person name="Cherry J.L."/>
            <person name="DiCuccio M."/>
            <person name="Hlavina W."/>
            <person name="Kapustin Y."/>
            <person name="Meric P."/>
            <person name="Maglott D."/>
            <person name="Birtle Z."/>
            <person name="Marques A.C."/>
            <person name="Graves T."/>
            <person name="Zhou S."/>
            <person name="Teague B."/>
            <person name="Potamousis K."/>
            <person name="Churas C."/>
            <person name="Place M."/>
            <person name="Herschleb J."/>
            <person name="Runnheim R."/>
            <person name="Forrest D."/>
            <person name="Amos-Landgraf J."/>
            <person name="Schwartz D.C."/>
            <person name="Cheng Z."/>
            <person name="Lindblad-Toh K."/>
            <person name="Eichler E.E."/>
            <person name="Ponting C.P."/>
        </authorList>
    </citation>
    <scope>NUCLEOTIDE SEQUENCE [LARGE SCALE GENOMIC DNA]</scope>
    <source>
        <strain>C57BL/6J</strain>
    </source>
</reference>
<reference key="6">
    <citation type="submission" date="2005-07" db="EMBL/GenBank/DDBJ databases">
        <authorList>
            <person name="Mural R.J."/>
            <person name="Adams M.D."/>
            <person name="Myers E.W."/>
            <person name="Smith H.O."/>
            <person name="Venter J.C."/>
        </authorList>
    </citation>
    <scope>NUCLEOTIDE SEQUENCE [LARGE SCALE GENOMIC DNA]</scope>
</reference>
<reference key="7">
    <citation type="journal article" date="2004" name="Genome Res.">
        <title>The status, quality, and expansion of the NIH full-length cDNA project: the Mammalian Gene Collection (MGC).</title>
        <authorList>
            <consortium name="The MGC Project Team"/>
        </authorList>
    </citation>
    <scope>NUCLEOTIDE SEQUENCE [LARGE SCALE MRNA] (ISOFORM 1)</scope>
    <source>
        <strain>FVB/N</strain>
        <strain>NMRI</strain>
        <tissue>Colon</tissue>
        <tissue>Mammary tumor</tissue>
    </source>
</reference>
<reference key="8">
    <citation type="journal article" date="2006" name="Dev. Biol.">
        <title>The mouse Ovol2 gene is required for cranial neural tube development.</title>
        <authorList>
            <person name="Mackay D.R."/>
            <person name="Hu M."/>
            <person name="Li B."/>
            <person name="Rheaume C."/>
            <person name="Dai X."/>
        </authorList>
    </citation>
    <scope>DISRUPTION PHENOTYPE</scope>
    <scope>DEVELOPMENTAL STAGE</scope>
    <scope>FUNCTION</scope>
</reference>
<reference key="9">
    <citation type="journal article" date="2013" name="J. Biol. Chem.">
        <title>The zinc finger transcription factor Ovol2 acts downstream of the bone morphogenetic protein pathway to regulate the cell fate decision between neuroectoderm and mesendoderm.</title>
        <authorList>
            <person name="Zhang T."/>
            <person name="Zhu Q."/>
            <person name="Xie Z."/>
            <person name="Chen Y."/>
            <person name="Qiao Y."/>
            <person name="Li L."/>
            <person name="Jing N."/>
        </authorList>
    </citation>
    <scope>INDUCTION</scope>
    <scope>FUNCTION</scope>
</reference>
<reference key="10">
    <citation type="journal article" date="2014" name="Dev. Cell">
        <title>Transcriptional mechanisms link epithelial plasticity to adhesion and differentiation of epidermal progenitor cells.</title>
        <authorList>
            <person name="Lee B."/>
            <person name="Villarreal-Ponce A."/>
            <person name="Fallahi M."/>
            <person name="Ovadia J."/>
            <person name="Sun P."/>
            <person name="Yu Q.C."/>
            <person name="Ito S."/>
            <person name="Sinha S."/>
            <person name="Nie Q."/>
            <person name="Dai X."/>
        </authorList>
    </citation>
    <scope>FUNCTION</scope>
</reference>
<reference key="11">
    <citation type="journal article" date="2014" name="Dev. Cell">
        <title>Mammary morphogenesis and regeneration require the inhibition of EMT at terminal end buds by Ovol2 transcriptional repressor.</title>
        <authorList>
            <person name="Watanabe K."/>
            <person name="Villarreal-Ponce A."/>
            <person name="Sun P."/>
            <person name="Salmans M.L."/>
            <person name="Fallahi M."/>
            <person name="Andersen B."/>
            <person name="Dai X."/>
        </authorList>
    </citation>
    <scope>FUNCTION</scope>
</reference>
<reference key="12">
    <citation type="journal article" date="2017" name="Sci. Rep.">
        <title>Conserved role of Ovo in germline development in mouse and Drosophila.</title>
        <authorList>
            <person name="Hayashi M."/>
            <person name="Shinozuka Y."/>
            <person name="Shigenobu S."/>
            <person name="Sato M."/>
            <person name="Sugimoto M."/>
            <person name="Ito S."/>
            <person name="Abe K."/>
            <person name="Kobayashi S."/>
        </authorList>
    </citation>
    <scope>FUNCTION</scope>
    <scope>DISRUPTION PHENOTYPE</scope>
</reference>
<reference key="13">
    <citation type="journal article" date="2022" name="Cell Metab.">
        <title>Obesity caused by an OVOL2 mutation reveals dual roles of OVOL2 in promoting thermogenesis and limiting white adipogenesis.</title>
        <authorList>
            <person name="Zhang Z."/>
            <person name="Jiang Y."/>
            <person name="Su L."/>
            <person name="Ludwig S."/>
            <person name="Zhang X."/>
            <person name="Tang M."/>
            <person name="Li X."/>
            <person name="Anderton P."/>
            <person name="Zhan X."/>
            <person name="Choi M."/>
            <person name="Russell J."/>
            <person name="Bu C.H."/>
            <person name="Lyon S."/>
            <person name="Xu D."/>
            <person name="Hildebrand S."/>
            <person name="Scott L."/>
            <person name="Quan J."/>
            <person name="Simpson R."/>
            <person name="Sun Q."/>
            <person name="Qin B."/>
            <person name="Collie T."/>
            <person name="Tadesse M."/>
            <person name="Moresco E.M.Y."/>
            <person name="Beutler B."/>
        </authorList>
    </citation>
    <scope>FUNCTION</scope>
    <scope>TISSUE SPECIFICITY</scope>
    <scope>MUTAGENESIS OF CYS-120</scope>
    <scope>SUBCELLULAR LOCATION</scope>
    <scope>INTERACTION WITH CEBPA</scope>
</reference>
<gene>
    <name evidence="18" type="primary">Ovol2</name>
    <name type="synonym">Ovo2</name>
    <name type="synonym">Zfp339</name>
    <name type="synonym">Znf339</name>
</gene>
<comment type="function">
    <text evidence="1 5 6 7 8 9 10 11">Zinc-finger transcription repressor factor (PubMed:15225875, PubMed:23319585, PubMed:36228616). Plays a critical role in maintaining the identity of epithelial lineages by suppressing epithelial-to mesenchymal transition (EMT) mainly through the repression of ZEB1, an EMT inducer (PubMed:24735878, PubMed:24735879). Positively regulates neuronal differentiation (PubMed:16423343, PubMed:23319585). Suppresses cell cycling and terminal differentiation of keratinocytes by directly repressing MYC and NOTCH1 (By similarity). Important for the correct development of primordial germ cells in embryos (PubMed:28059165). Plays dual functions in thermogenesis and adipogenesis to maintain energy balance. Essential for brown/beige adipose tissue-mediated thermogenesis, is necessary for the development of brown adipocytes. In white adipose tissues, limits adipogenesis by blocking CEBPA binding to its transcriptional targets and inhibiting its transcription factor activity (PubMed:36228616).</text>
</comment>
<comment type="subunit">
    <text evidence="11">Interacts (via zinc-finger domains) with CEBPA (via bZIP domain); the interaction inhibits the transcription factor activity of CEBPA and is required to repress adipogenesis.</text>
</comment>
<comment type="subcellular location">
    <subcellularLocation>
        <location evidence="11 12">Nucleus</location>
    </subcellularLocation>
</comment>
<comment type="alternative products">
    <event type="alternative splicing"/>
    <isoform>
        <id>Q8CIV7-1</id>
        <name>1</name>
        <name>MOVO-A</name>
        <sequence type="displayed"/>
    </isoform>
    <isoform>
        <id>Q8CIV7-2</id>
        <name>2</name>
        <name>MOVO-C</name>
        <sequence type="described" ref="VSP_013577 VSP_013578"/>
    </isoform>
    <isoform>
        <id>Q8CIV7-3</id>
        <name>3</name>
        <name>MOVO-B</name>
        <sequence type="described" ref="VSP_013576"/>
    </isoform>
</comment>
<comment type="tissue specificity">
    <text evidence="4 5 11 12">Expressed highly in testis, specifically in spermatocytes. Expressed also in skin and at lower levels in the ovary (PubMed:12213202, PubMed:15225875, PubMed:36228616, PubMed:9468311). Expressed in adipose tissues. Expression is lower than in testis and a relatively higher expression level is detected in the stromal vascular fraction (SVF) than in fat cells themselves (PubMed:36228616).</text>
</comment>
<comment type="developmental stage">
    <text evidence="5 6 10">Expressed during early-mid embryogenesis, particularly in the inner cell mass at 3.5 dpc, in epiblast at 6.5 dpc, and at later stages in ectodermally derived tissues such as the rostral surface ectoderm (PubMed:16423343). Expressed in embryonic stem cells, epiblasts of 6.4 dpc embryos and primordial germ cells (PGCs) (PubMed:28059165). High expression levels in PGCs of 8.5 dpc embryos decrease over embryogenesis (PubMed:28059165). Up-regulated during prepupertal testis development (PubMed:15225875).</text>
</comment>
<comment type="induction">
    <text evidence="7">Down-regulated during embryonic stem cell neural differentiation and up-regulated by BMP4.</text>
</comment>
<comment type="disruption phenotype">
    <text evidence="6 10">Mutant embryos are small and die at 9.5 dpc-10.5 dpc with an open neural tube, impaired extra-embryonic and embryonic vascularization, abnormal cardiogenesis and placental defects (PubMed:16423343). Reduced number of primordial germ cells in 8.0 dpc embryos (PubMed:28059165).</text>
</comment>
<comment type="miscellaneous">
    <molecule>Isoform 3</molecule>
    <text evidence="17">Major form in the testis.</text>
</comment>
<comment type="similarity">
    <text evidence="17">Belongs to the krueppel C2H2-type zinc-finger protein family.</text>
</comment>
<sequence length="274" mass="30685">MPKVFLVKRRSPGVSVRSWDELPDDKRADTYIPVSLGCLLRDPPEDCRSDGGSSSGCSSSAGEPGGAESSSSPRAPEPETPELHDAQGTDGHLAAMQRPVARSKIKFTTGTCDNSVIHNCDLCGKSFRLQRMLNRHLKCHNQVKRHLCTFCGKGFNDTFDLKRHVRTHTGIRPYKCEVCNKAFTQRCSLESHLKKIHGVQQQYAYKQRRDKLYVCEDCGYTGPTQEDLYLHVNSDHPGSTFLKKTSKKLAALMQNKLTSPLQENSTLSEEEEKK</sequence>
<feature type="chain" id="PRO_0000047014" description="Transcription factor Ovo-like 2">
    <location>
        <begin position="1"/>
        <end position="274"/>
    </location>
</feature>
<feature type="zinc finger region" description="C2H2-type 1" evidence="2">
    <location>
        <begin position="118"/>
        <end position="140"/>
    </location>
</feature>
<feature type="zinc finger region" description="C2H2-type 2" evidence="2">
    <location>
        <begin position="146"/>
        <end position="168"/>
    </location>
</feature>
<feature type="zinc finger region" description="C2H2-type 3" evidence="2">
    <location>
        <begin position="174"/>
        <end position="197"/>
    </location>
</feature>
<feature type="zinc finger region" description="C2H2-type 4" evidence="2">
    <location>
        <begin position="213"/>
        <end position="236"/>
    </location>
</feature>
<feature type="region of interest" description="Disordered" evidence="3">
    <location>
        <begin position="1"/>
        <end position="88"/>
    </location>
</feature>
<feature type="compositionally biased region" description="Basic residues" evidence="3">
    <location>
        <begin position="1"/>
        <end position="11"/>
    </location>
</feature>
<feature type="compositionally biased region" description="Basic and acidic residues" evidence="3">
    <location>
        <begin position="18"/>
        <end position="29"/>
    </location>
</feature>
<feature type="compositionally biased region" description="Low complexity" evidence="3">
    <location>
        <begin position="50"/>
        <end position="74"/>
    </location>
</feature>
<feature type="modified residue" description="Phosphoserine" evidence="1">
    <location>
        <position position="268"/>
    </location>
</feature>
<feature type="splice variant" id="VSP_013576" description="In isoform 3." evidence="14 15 16">
    <location>
        <begin position="1"/>
        <end position="95"/>
    </location>
</feature>
<feature type="splice variant" id="VSP_013577" description="In isoform 2." evidence="13 14">
    <location>
        <begin position="1"/>
        <end position="33"/>
    </location>
</feature>
<feature type="splice variant" id="VSP_013578" description="In isoform 2." evidence="13 14">
    <original>V</original>
    <variation>M</variation>
    <location>
        <position position="34"/>
    </location>
</feature>
<feature type="mutagenesis site" description="Causes obesity in mice. Obesity develops with normal food intake and reduced energy expenditure. Mice are cold intolerant with defective brown/beige adipose tissues. Reduces interaction with CEBPA." evidence="11">
    <original>C</original>
    <variation>Y</variation>
    <location>
        <position position="120"/>
    </location>
</feature>
<feature type="sequence conflict" description="In Ref. 2; AAM11991/AAM11992." evidence="17" ref="2">
    <original>A</original>
    <variation>S</variation>
    <location>
        <position position="67"/>
    </location>
</feature>
<evidence type="ECO:0000250" key="1">
    <source>
        <dbReference type="UniProtKB" id="Q9BRP0"/>
    </source>
</evidence>
<evidence type="ECO:0000255" key="2">
    <source>
        <dbReference type="PROSITE-ProRule" id="PRU00042"/>
    </source>
</evidence>
<evidence type="ECO:0000256" key="3">
    <source>
        <dbReference type="SAM" id="MobiDB-lite"/>
    </source>
</evidence>
<evidence type="ECO:0000269" key="4">
    <source>
    </source>
</evidence>
<evidence type="ECO:0000269" key="5">
    <source>
    </source>
</evidence>
<evidence type="ECO:0000269" key="6">
    <source>
    </source>
</evidence>
<evidence type="ECO:0000269" key="7">
    <source>
    </source>
</evidence>
<evidence type="ECO:0000269" key="8">
    <source>
    </source>
</evidence>
<evidence type="ECO:0000269" key="9">
    <source>
    </source>
</evidence>
<evidence type="ECO:0000269" key="10">
    <source>
    </source>
</evidence>
<evidence type="ECO:0000269" key="11">
    <source>
    </source>
</evidence>
<evidence type="ECO:0000269" key="12">
    <source>
    </source>
</evidence>
<evidence type="ECO:0000303" key="13">
    <source>
    </source>
</evidence>
<evidence type="ECO:0000303" key="14">
    <source>
    </source>
</evidence>
<evidence type="ECO:0000303" key="15">
    <source>
    </source>
</evidence>
<evidence type="ECO:0000303" key="16">
    <source>
    </source>
</evidence>
<evidence type="ECO:0000305" key="17"/>
<evidence type="ECO:0000312" key="18">
    <source>
        <dbReference type="MGI" id="MGI:1338039"/>
    </source>
</evidence>
<proteinExistence type="evidence at protein level"/>
<organism>
    <name type="scientific">Mus musculus</name>
    <name type="common">Mouse</name>
    <dbReference type="NCBI Taxonomy" id="10090"/>
    <lineage>
        <taxon>Eukaryota</taxon>
        <taxon>Metazoa</taxon>
        <taxon>Chordata</taxon>
        <taxon>Craniata</taxon>
        <taxon>Vertebrata</taxon>
        <taxon>Euteleostomi</taxon>
        <taxon>Mammalia</taxon>
        <taxon>Eutheria</taxon>
        <taxon>Euarchontoglires</taxon>
        <taxon>Glires</taxon>
        <taxon>Rodentia</taxon>
        <taxon>Myomorpha</taxon>
        <taxon>Muroidea</taxon>
        <taxon>Muridae</taxon>
        <taxon>Murinae</taxon>
        <taxon>Mus</taxon>
        <taxon>Mus</taxon>
    </lineage>
</organism>